<sequence length="123" mass="13513">MPTISQLVRKGREKLVVKGKSPALKESPQKRGVCTRVYTTTPKKPNSALRKVARVRLTNGIEVTSYIPGVGHNLQEHSVVMIRGGRVKDLPGVRYHIVRGTLDSVGVAGRKQSRSKYGAKRPS</sequence>
<proteinExistence type="inferred from homology"/>
<reference key="1">
    <citation type="submission" date="2001-05" db="EMBL/GenBank/DDBJ databases">
        <title>Identification of a histidine kinase (KfaA) for FruA of Myxococcus xanthus.</title>
        <authorList>
            <person name="Ueki T."/>
            <person name="Inouye S."/>
        </authorList>
    </citation>
    <scope>NUCLEOTIDE SEQUENCE [GENOMIC DNA]</scope>
    <source>
        <strain>DZF1</strain>
    </source>
</reference>
<keyword id="KW-0488">Methylation</keyword>
<keyword id="KW-0687">Ribonucleoprotein</keyword>
<keyword id="KW-0689">Ribosomal protein</keyword>
<keyword id="KW-0694">RNA-binding</keyword>
<keyword id="KW-0699">rRNA-binding</keyword>
<keyword id="KW-0820">tRNA-binding</keyword>
<dbReference type="EMBL" id="AY033943">
    <property type="protein sequence ID" value="AAK59393.1"/>
    <property type="molecule type" value="Genomic_DNA"/>
</dbReference>
<dbReference type="RefSeq" id="WP_002637381.1">
    <property type="nucleotide sequence ID" value="NZ_JABFNT010000126.1"/>
</dbReference>
<dbReference type="SMR" id="Q8KRD1"/>
<dbReference type="GeneID" id="41360648"/>
<dbReference type="OMA" id="VCIRVYT"/>
<dbReference type="GO" id="GO:0015935">
    <property type="term" value="C:small ribosomal subunit"/>
    <property type="evidence" value="ECO:0007669"/>
    <property type="project" value="InterPro"/>
</dbReference>
<dbReference type="GO" id="GO:0019843">
    <property type="term" value="F:rRNA binding"/>
    <property type="evidence" value="ECO:0007669"/>
    <property type="project" value="UniProtKB-UniRule"/>
</dbReference>
<dbReference type="GO" id="GO:0003735">
    <property type="term" value="F:structural constituent of ribosome"/>
    <property type="evidence" value="ECO:0007669"/>
    <property type="project" value="InterPro"/>
</dbReference>
<dbReference type="GO" id="GO:0000049">
    <property type="term" value="F:tRNA binding"/>
    <property type="evidence" value="ECO:0007669"/>
    <property type="project" value="UniProtKB-UniRule"/>
</dbReference>
<dbReference type="GO" id="GO:0006412">
    <property type="term" value="P:translation"/>
    <property type="evidence" value="ECO:0007669"/>
    <property type="project" value="UniProtKB-UniRule"/>
</dbReference>
<dbReference type="CDD" id="cd03368">
    <property type="entry name" value="Ribosomal_S12"/>
    <property type="match status" value="1"/>
</dbReference>
<dbReference type="FunFam" id="2.40.50.140:FF:000001">
    <property type="entry name" value="30S ribosomal protein S12"/>
    <property type="match status" value="1"/>
</dbReference>
<dbReference type="Gene3D" id="2.40.50.140">
    <property type="entry name" value="Nucleic acid-binding proteins"/>
    <property type="match status" value="1"/>
</dbReference>
<dbReference type="HAMAP" id="MF_00403_B">
    <property type="entry name" value="Ribosomal_uS12_B"/>
    <property type="match status" value="1"/>
</dbReference>
<dbReference type="InterPro" id="IPR012340">
    <property type="entry name" value="NA-bd_OB-fold"/>
</dbReference>
<dbReference type="InterPro" id="IPR006032">
    <property type="entry name" value="Ribosomal_uS12"/>
</dbReference>
<dbReference type="InterPro" id="IPR005679">
    <property type="entry name" value="Ribosomal_uS12_bac"/>
</dbReference>
<dbReference type="NCBIfam" id="TIGR00981">
    <property type="entry name" value="rpsL_bact"/>
    <property type="match status" value="1"/>
</dbReference>
<dbReference type="PANTHER" id="PTHR11652">
    <property type="entry name" value="30S RIBOSOMAL PROTEIN S12 FAMILY MEMBER"/>
    <property type="match status" value="1"/>
</dbReference>
<dbReference type="Pfam" id="PF00164">
    <property type="entry name" value="Ribosom_S12_S23"/>
    <property type="match status" value="1"/>
</dbReference>
<dbReference type="PIRSF" id="PIRSF002133">
    <property type="entry name" value="Ribosomal_S12/S23"/>
    <property type="match status" value="1"/>
</dbReference>
<dbReference type="PRINTS" id="PR01034">
    <property type="entry name" value="RIBOSOMALS12"/>
</dbReference>
<dbReference type="SUPFAM" id="SSF50249">
    <property type="entry name" value="Nucleic acid-binding proteins"/>
    <property type="match status" value="1"/>
</dbReference>
<dbReference type="PROSITE" id="PS00055">
    <property type="entry name" value="RIBOSOMAL_S12"/>
    <property type="match status" value="1"/>
</dbReference>
<gene>
    <name evidence="2" type="primary">rpsL</name>
</gene>
<evidence type="ECO:0000250" key="1"/>
<evidence type="ECO:0000255" key="2">
    <source>
        <dbReference type="HAMAP-Rule" id="MF_00403"/>
    </source>
</evidence>
<evidence type="ECO:0000305" key="3"/>
<name>RS12_MYXXA</name>
<protein>
    <recommendedName>
        <fullName evidence="2">Small ribosomal subunit protein uS12</fullName>
    </recommendedName>
    <alternativeName>
        <fullName evidence="3">30S ribosomal protein S12</fullName>
    </alternativeName>
</protein>
<feature type="chain" id="PRO_0000146273" description="Small ribosomal subunit protein uS12">
    <location>
        <begin position="1"/>
        <end position="123"/>
    </location>
</feature>
<feature type="modified residue" description="3-methylthioaspartic acid" evidence="1">
    <location>
        <position position="89"/>
    </location>
</feature>
<organism>
    <name type="scientific">Myxococcus xanthus</name>
    <dbReference type="NCBI Taxonomy" id="34"/>
    <lineage>
        <taxon>Bacteria</taxon>
        <taxon>Pseudomonadati</taxon>
        <taxon>Myxococcota</taxon>
        <taxon>Myxococcia</taxon>
        <taxon>Myxococcales</taxon>
        <taxon>Cystobacterineae</taxon>
        <taxon>Myxococcaceae</taxon>
        <taxon>Myxococcus</taxon>
    </lineage>
</organism>
<accession>Q8KRD1</accession>
<comment type="function">
    <text evidence="2">With S4 and S5 plays an important role in translational accuracy.</text>
</comment>
<comment type="function">
    <text evidence="2">Interacts with and stabilizes bases of the 16S rRNA that are involved in tRNA selection in the A site and with the mRNA backbone. Located at the interface of the 30S and 50S subunits, it traverses the body of the 30S subunit contacting proteins on the other side and probably holding the rRNA structure together. The combined cluster of proteins S8, S12 and S17 appears to hold together the shoulder and platform of the 30S subunit.</text>
</comment>
<comment type="subunit">
    <text evidence="2">Part of the 30S ribosomal subunit. Contacts proteins S8 and S17. May interact with IF1 in the 30S initiation complex.</text>
</comment>
<comment type="similarity">
    <text evidence="2">Belongs to the universal ribosomal protein uS12 family.</text>
</comment>